<dbReference type="EMBL" id="CP000614">
    <property type="protein sequence ID" value="ABO56095.1"/>
    <property type="molecule type" value="Genomic_DNA"/>
</dbReference>
<dbReference type="SMR" id="A4JIJ2"/>
<dbReference type="KEGG" id="bvi:Bcep1808_3104"/>
<dbReference type="eggNOG" id="COG2063">
    <property type="taxonomic scope" value="Bacteria"/>
</dbReference>
<dbReference type="HOGENOM" id="CLU_069313_0_0_4"/>
<dbReference type="Proteomes" id="UP000002287">
    <property type="component" value="Chromosome 1"/>
</dbReference>
<dbReference type="GO" id="GO:0009427">
    <property type="term" value="C:bacterial-type flagellum basal body, distal rod, L ring"/>
    <property type="evidence" value="ECO:0007669"/>
    <property type="project" value="InterPro"/>
</dbReference>
<dbReference type="GO" id="GO:0009279">
    <property type="term" value="C:cell outer membrane"/>
    <property type="evidence" value="ECO:0007669"/>
    <property type="project" value="UniProtKB-SubCell"/>
</dbReference>
<dbReference type="GO" id="GO:0003774">
    <property type="term" value="F:cytoskeletal motor activity"/>
    <property type="evidence" value="ECO:0007669"/>
    <property type="project" value="InterPro"/>
</dbReference>
<dbReference type="GO" id="GO:0071973">
    <property type="term" value="P:bacterial-type flagellum-dependent cell motility"/>
    <property type="evidence" value="ECO:0007669"/>
    <property type="project" value="InterPro"/>
</dbReference>
<dbReference type="HAMAP" id="MF_00415">
    <property type="entry name" value="FlgH"/>
    <property type="match status" value="1"/>
</dbReference>
<dbReference type="InterPro" id="IPR000527">
    <property type="entry name" value="Flag_Lring"/>
</dbReference>
<dbReference type="NCBIfam" id="NF009337">
    <property type="entry name" value="PRK12697.1"/>
    <property type="match status" value="1"/>
</dbReference>
<dbReference type="PANTHER" id="PTHR34933">
    <property type="entry name" value="FLAGELLAR L-RING PROTEIN"/>
    <property type="match status" value="1"/>
</dbReference>
<dbReference type="PANTHER" id="PTHR34933:SF3">
    <property type="entry name" value="FLAGELLAR L-RING PROTEIN"/>
    <property type="match status" value="1"/>
</dbReference>
<dbReference type="Pfam" id="PF02107">
    <property type="entry name" value="FlgH"/>
    <property type="match status" value="1"/>
</dbReference>
<dbReference type="PRINTS" id="PR01008">
    <property type="entry name" value="FLGLRINGFLGH"/>
</dbReference>
<dbReference type="PROSITE" id="PS51257">
    <property type="entry name" value="PROKAR_LIPOPROTEIN"/>
    <property type="match status" value="1"/>
</dbReference>
<accession>A4JIJ2</accession>
<protein>
    <recommendedName>
        <fullName evidence="1">Flagellar L-ring protein</fullName>
    </recommendedName>
    <alternativeName>
        <fullName evidence="1">Basal body L-ring protein</fullName>
    </alternativeName>
</protein>
<feature type="signal peptide" evidence="1">
    <location>
        <begin position="1"/>
        <end position="25"/>
    </location>
</feature>
<feature type="chain" id="PRO_1000050084" description="Flagellar L-ring protein">
    <location>
        <begin position="26"/>
        <end position="229"/>
    </location>
</feature>
<feature type="lipid moiety-binding region" description="N-palmitoyl cysteine" evidence="1">
    <location>
        <position position="26"/>
    </location>
</feature>
<feature type="lipid moiety-binding region" description="S-diacylglycerol cysteine" evidence="1">
    <location>
        <position position="26"/>
    </location>
</feature>
<proteinExistence type="inferred from homology"/>
<sequence>MKQVRLLPSATVRAACAVAVAALAGCAQIPRDPIIQQPMTAQPPMPIAMQAPGSIFNPGFAGRPLFEDQRPRNVGDILTIVIAENINATKSSGANTNRQGNTDFNVPTAAFLGGLFAKANLSATGANKFAATGGASAANTFNGTITVTVTNVLPNGNLVVSGEKQMLINQGNEFVRFSGVVNPNTISGANSVYSTQVADARIEYSAKGYINEAETMGWLQRFFLNLAPW</sequence>
<reference key="1">
    <citation type="submission" date="2007-03" db="EMBL/GenBank/DDBJ databases">
        <title>Complete sequence of chromosome 1 of Burkholderia vietnamiensis G4.</title>
        <authorList>
            <consortium name="US DOE Joint Genome Institute"/>
            <person name="Copeland A."/>
            <person name="Lucas S."/>
            <person name="Lapidus A."/>
            <person name="Barry K."/>
            <person name="Detter J.C."/>
            <person name="Glavina del Rio T."/>
            <person name="Hammon N."/>
            <person name="Israni S."/>
            <person name="Dalin E."/>
            <person name="Tice H."/>
            <person name="Pitluck S."/>
            <person name="Chain P."/>
            <person name="Malfatti S."/>
            <person name="Shin M."/>
            <person name="Vergez L."/>
            <person name="Schmutz J."/>
            <person name="Larimer F."/>
            <person name="Land M."/>
            <person name="Hauser L."/>
            <person name="Kyrpides N."/>
            <person name="Tiedje J."/>
            <person name="Richardson P."/>
        </authorList>
    </citation>
    <scope>NUCLEOTIDE SEQUENCE [LARGE SCALE GENOMIC DNA]</scope>
    <source>
        <strain>G4 / LMG 22486</strain>
    </source>
</reference>
<evidence type="ECO:0000255" key="1">
    <source>
        <dbReference type="HAMAP-Rule" id="MF_00415"/>
    </source>
</evidence>
<keyword id="KW-0975">Bacterial flagellum</keyword>
<keyword id="KW-0998">Cell outer membrane</keyword>
<keyword id="KW-0449">Lipoprotein</keyword>
<keyword id="KW-0472">Membrane</keyword>
<keyword id="KW-0564">Palmitate</keyword>
<keyword id="KW-0732">Signal</keyword>
<organism>
    <name type="scientific">Burkholderia vietnamiensis (strain G4 / LMG 22486)</name>
    <name type="common">Burkholderia cepacia (strain R1808)</name>
    <dbReference type="NCBI Taxonomy" id="269482"/>
    <lineage>
        <taxon>Bacteria</taxon>
        <taxon>Pseudomonadati</taxon>
        <taxon>Pseudomonadota</taxon>
        <taxon>Betaproteobacteria</taxon>
        <taxon>Burkholderiales</taxon>
        <taxon>Burkholderiaceae</taxon>
        <taxon>Burkholderia</taxon>
        <taxon>Burkholderia cepacia complex</taxon>
    </lineage>
</organism>
<name>FLGH_BURVG</name>
<comment type="function">
    <text evidence="1">Assembles around the rod to form the L-ring and probably protects the motor/basal body from shearing forces during rotation.</text>
</comment>
<comment type="subunit">
    <text evidence="1">The basal body constitutes a major portion of the flagellar organelle and consists of four rings (L,P,S, and M) mounted on a central rod.</text>
</comment>
<comment type="subcellular location">
    <subcellularLocation>
        <location evidence="1">Cell outer membrane</location>
        <topology evidence="1">Lipid-anchor</topology>
    </subcellularLocation>
    <subcellularLocation>
        <location evidence="1">Bacterial flagellum basal body</location>
    </subcellularLocation>
</comment>
<comment type="similarity">
    <text evidence="1">Belongs to the FlgH family.</text>
</comment>
<gene>
    <name evidence="1" type="primary">flgH</name>
    <name type="ordered locus">Bcep1808_3104</name>
</gene>